<feature type="chain" id="PRO_1000201609" description="Aspartate carbamoyltransferase catalytic subunit">
    <location>
        <begin position="1"/>
        <end position="320"/>
    </location>
</feature>
<feature type="binding site" evidence="1">
    <location>
        <position position="68"/>
    </location>
    <ligand>
        <name>carbamoyl phosphate</name>
        <dbReference type="ChEBI" id="CHEBI:58228"/>
    </ligand>
</feature>
<feature type="binding site" evidence="1">
    <location>
        <position position="69"/>
    </location>
    <ligand>
        <name>carbamoyl phosphate</name>
        <dbReference type="ChEBI" id="CHEBI:58228"/>
    </ligand>
</feature>
<feature type="binding site" evidence="1">
    <location>
        <position position="96"/>
    </location>
    <ligand>
        <name>L-aspartate</name>
        <dbReference type="ChEBI" id="CHEBI:29991"/>
    </ligand>
</feature>
<feature type="binding site" evidence="1">
    <location>
        <position position="118"/>
    </location>
    <ligand>
        <name>carbamoyl phosphate</name>
        <dbReference type="ChEBI" id="CHEBI:58228"/>
    </ligand>
</feature>
<feature type="binding site" evidence="1">
    <location>
        <position position="148"/>
    </location>
    <ligand>
        <name>carbamoyl phosphate</name>
        <dbReference type="ChEBI" id="CHEBI:58228"/>
    </ligand>
</feature>
<feature type="binding site" evidence="1">
    <location>
        <position position="151"/>
    </location>
    <ligand>
        <name>carbamoyl phosphate</name>
        <dbReference type="ChEBI" id="CHEBI:58228"/>
    </ligand>
</feature>
<feature type="binding site" evidence="1">
    <location>
        <position position="181"/>
    </location>
    <ligand>
        <name>L-aspartate</name>
        <dbReference type="ChEBI" id="CHEBI:29991"/>
    </ligand>
</feature>
<feature type="binding site" evidence="1">
    <location>
        <position position="236"/>
    </location>
    <ligand>
        <name>L-aspartate</name>
        <dbReference type="ChEBI" id="CHEBI:29991"/>
    </ligand>
</feature>
<feature type="binding site" evidence="1">
    <location>
        <position position="277"/>
    </location>
    <ligand>
        <name>carbamoyl phosphate</name>
        <dbReference type="ChEBI" id="CHEBI:58228"/>
    </ligand>
</feature>
<feature type="binding site" evidence="1">
    <location>
        <position position="278"/>
    </location>
    <ligand>
        <name>carbamoyl phosphate</name>
        <dbReference type="ChEBI" id="CHEBI:58228"/>
    </ligand>
</feature>
<protein>
    <recommendedName>
        <fullName evidence="1">Aspartate carbamoyltransferase catalytic subunit</fullName>
        <ecNumber evidence="1">2.1.3.2</ecNumber>
    </recommendedName>
    <alternativeName>
        <fullName evidence="1">Aspartate transcarbamylase</fullName>
        <shortName evidence="1">ATCase</shortName>
    </alternativeName>
</protein>
<dbReference type="EC" id="2.1.3.2" evidence="1"/>
<dbReference type="EMBL" id="CP001635">
    <property type="protein sequence ID" value="ACS21219.1"/>
    <property type="molecule type" value="Genomic_DNA"/>
</dbReference>
<dbReference type="SMR" id="C5CL68"/>
<dbReference type="STRING" id="543728.Vapar_4614"/>
<dbReference type="KEGG" id="vap:Vapar_4614"/>
<dbReference type="eggNOG" id="COG0540">
    <property type="taxonomic scope" value="Bacteria"/>
</dbReference>
<dbReference type="HOGENOM" id="CLU_043846_2_0_4"/>
<dbReference type="OrthoDB" id="9774690at2"/>
<dbReference type="UniPathway" id="UPA00070">
    <property type="reaction ID" value="UER00116"/>
</dbReference>
<dbReference type="GO" id="GO:0005829">
    <property type="term" value="C:cytosol"/>
    <property type="evidence" value="ECO:0007669"/>
    <property type="project" value="TreeGrafter"/>
</dbReference>
<dbReference type="GO" id="GO:0016597">
    <property type="term" value="F:amino acid binding"/>
    <property type="evidence" value="ECO:0007669"/>
    <property type="project" value="InterPro"/>
</dbReference>
<dbReference type="GO" id="GO:0004070">
    <property type="term" value="F:aspartate carbamoyltransferase activity"/>
    <property type="evidence" value="ECO:0007669"/>
    <property type="project" value="UniProtKB-UniRule"/>
</dbReference>
<dbReference type="GO" id="GO:0006207">
    <property type="term" value="P:'de novo' pyrimidine nucleobase biosynthetic process"/>
    <property type="evidence" value="ECO:0007669"/>
    <property type="project" value="InterPro"/>
</dbReference>
<dbReference type="GO" id="GO:0044205">
    <property type="term" value="P:'de novo' UMP biosynthetic process"/>
    <property type="evidence" value="ECO:0007669"/>
    <property type="project" value="UniProtKB-UniRule"/>
</dbReference>
<dbReference type="GO" id="GO:0006520">
    <property type="term" value="P:amino acid metabolic process"/>
    <property type="evidence" value="ECO:0007669"/>
    <property type="project" value="InterPro"/>
</dbReference>
<dbReference type="FunFam" id="3.40.50.1370:FF:000007">
    <property type="entry name" value="Aspartate carbamoyltransferase"/>
    <property type="match status" value="1"/>
</dbReference>
<dbReference type="Gene3D" id="3.40.50.1370">
    <property type="entry name" value="Aspartate/ornithine carbamoyltransferase"/>
    <property type="match status" value="2"/>
</dbReference>
<dbReference type="HAMAP" id="MF_00001">
    <property type="entry name" value="Asp_carb_tr"/>
    <property type="match status" value="1"/>
</dbReference>
<dbReference type="InterPro" id="IPR006132">
    <property type="entry name" value="Asp/Orn_carbamoyltranf_P-bd"/>
</dbReference>
<dbReference type="InterPro" id="IPR006130">
    <property type="entry name" value="Asp/Orn_carbamoylTrfase"/>
</dbReference>
<dbReference type="InterPro" id="IPR036901">
    <property type="entry name" value="Asp/Orn_carbamoylTrfase_sf"/>
</dbReference>
<dbReference type="InterPro" id="IPR002082">
    <property type="entry name" value="Asp_carbamoyltransf"/>
</dbReference>
<dbReference type="InterPro" id="IPR006131">
    <property type="entry name" value="Asp_carbamoyltransf_Asp/Orn-bd"/>
</dbReference>
<dbReference type="NCBIfam" id="TIGR00670">
    <property type="entry name" value="asp_carb_tr"/>
    <property type="match status" value="1"/>
</dbReference>
<dbReference type="NCBIfam" id="NF002032">
    <property type="entry name" value="PRK00856.1"/>
    <property type="match status" value="1"/>
</dbReference>
<dbReference type="PANTHER" id="PTHR45753:SF6">
    <property type="entry name" value="ASPARTATE CARBAMOYLTRANSFERASE"/>
    <property type="match status" value="1"/>
</dbReference>
<dbReference type="PANTHER" id="PTHR45753">
    <property type="entry name" value="ORNITHINE CARBAMOYLTRANSFERASE, MITOCHONDRIAL"/>
    <property type="match status" value="1"/>
</dbReference>
<dbReference type="Pfam" id="PF00185">
    <property type="entry name" value="OTCace"/>
    <property type="match status" value="1"/>
</dbReference>
<dbReference type="Pfam" id="PF02729">
    <property type="entry name" value="OTCace_N"/>
    <property type="match status" value="1"/>
</dbReference>
<dbReference type="PRINTS" id="PR00100">
    <property type="entry name" value="AOTCASE"/>
</dbReference>
<dbReference type="PRINTS" id="PR00101">
    <property type="entry name" value="ATCASE"/>
</dbReference>
<dbReference type="SUPFAM" id="SSF53671">
    <property type="entry name" value="Aspartate/ornithine carbamoyltransferase"/>
    <property type="match status" value="1"/>
</dbReference>
<dbReference type="PROSITE" id="PS00097">
    <property type="entry name" value="CARBAMOYLTRANSFERASE"/>
    <property type="match status" value="1"/>
</dbReference>
<proteinExistence type="inferred from homology"/>
<evidence type="ECO:0000255" key="1">
    <source>
        <dbReference type="HAMAP-Rule" id="MF_00001"/>
    </source>
</evidence>
<name>PYRB_VARPS</name>
<keyword id="KW-0665">Pyrimidine biosynthesis</keyword>
<keyword id="KW-0808">Transferase</keyword>
<gene>
    <name evidence="1" type="primary">pyrB</name>
    <name type="ordered locus">Vapar_4614</name>
</gene>
<sequence>MLYKRNPQLNKNGELIHLLSIEGLPKDIVTHILDTAANFTSVSDREVKKVPLLRGKSVFNLFFENSTRTRTTFEIAAKRLSADVINLDIARSSATKGESLLDTIANLSAMAADLFVVRHSESGAPYLIAQHVAPHVHVVNAGDGRHAHPTQGLLDMYTIRHYKKDFANLTVAIVGDVLHSRVARSDIHALTTLGCAEVRVVGPKTLVPGDMAGMGVRVCHTLEEGIRDCDVIIMLRLQNERMSGALLPSSQEFFKTYGLTPEKLQLAKSDAIVMHPGPINRGVEIDSAVVDGKQSVILPQVTFGIAVRMAVMSIVAGNEA</sequence>
<reference key="1">
    <citation type="journal article" date="2011" name="J. Bacteriol.">
        <title>Complete genome sequence of the metabolically versatile plant growth-promoting endophyte, Variovorax paradoxus S110.</title>
        <authorList>
            <person name="Han J.I."/>
            <person name="Choi H.K."/>
            <person name="Lee S.W."/>
            <person name="Orwin P.M."/>
            <person name="Kim J."/>
            <person name="Laroe S.L."/>
            <person name="Kim T.G."/>
            <person name="O'Neil J."/>
            <person name="Leadbetter J.R."/>
            <person name="Lee S.Y."/>
            <person name="Hur C.G."/>
            <person name="Spain J.C."/>
            <person name="Ovchinnikova G."/>
            <person name="Goodwin L."/>
            <person name="Han C."/>
        </authorList>
    </citation>
    <scope>NUCLEOTIDE SEQUENCE [LARGE SCALE GENOMIC DNA]</scope>
    <source>
        <strain>S110</strain>
    </source>
</reference>
<accession>C5CL68</accession>
<organism>
    <name type="scientific">Variovorax paradoxus (strain S110)</name>
    <dbReference type="NCBI Taxonomy" id="543728"/>
    <lineage>
        <taxon>Bacteria</taxon>
        <taxon>Pseudomonadati</taxon>
        <taxon>Pseudomonadota</taxon>
        <taxon>Betaproteobacteria</taxon>
        <taxon>Burkholderiales</taxon>
        <taxon>Comamonadaceae</taxon>
        <taxon>Variovorax</taxon>
    </lineage>
</organism>
<comment type="function">
    <text evidence="1">Catalyzes the condensation of carbamoyl phosphate and aspartate to form carbamoyl aspartate and inorganic phosphate, the committed step in the de novo pyrimidine nucleotide biosynthesis pathway.</text>
</comment>
<comment type="catalytic activity">
    <reaction evidence="1">
        <text>carbamoyl phosphate + L-aspartate = N-carbamoyl-L-aspartate + phosphate + H(+)</text>
        <dbReference type="Rhea" id="RHEA:20013"/>
        <dbReference type="ChEBI" id="CHEBI:15378"/>
        <dbReference type="ChEBI" id="CHEBI:29991"/>
        <dbReference type="ChEBI" id="CHEBI:32814"/>
        <dbReference type="ChEBI" id="CHEBI:43474"/>
        <dbReference type="ChEBI" id="CHEBI:58228"/>
        <dbReference type="EC" id="2.1.3.2"/>
    </reaction>
</comment>
<comment type="pathway">
    <text evidence="1">Pyrimidine metabolism; UMP biosynthesis via de novo pathway; (S)-dihydroorotate from bicarbonate: step 2/3.</text>
</comment>
<comment type="subunit">
    <text evidence="1">Heterododecamer (2C3:3R2) of six catalytic PyrB chains organized as two trimers (C3), and six regulatory PyrI chains organized as three dimers (R2).</text>
</comment>
<comment type="similarity">
    <text evidence="1">Belongs to the aspartate/ornithine carbamoyltransferase superfamily. ATCase family.</text>
</comment>